<feature type="chain" id="PRO_0000414656" description="Cell division protein FtsQ">
    <location>
        <begin position="1"/>
        <end position="258"/>
    </location>
</feature>
<feature type="topological domain" description="Cytoplasmic" evidence="1">
    <location>
        <begin position="1"/>
        <end position="29"/>
    </location>
</feature>
<feature type="transmembrane region" description="Helical" evidence="1">
    <location>
        <begin position="30"/>
        <end position="50"/>
    </location>
</feature>
<feature type="topological domain" description="Periplasmic" evidence="1">
    <location>
        <begin position="51"/>
        <end position="258"/>
    </location>
</feature>
<feature type="domain" description="POTRA" evidence="2">
    <location>
        <begin position="57"/>
        <end position="127"/>
    </location>
</feature>
<name>FTSQ_ALCBS</name>
<keyword id="KW-0131">Cell cycle</keyword>
<keyword id="KW-0132">Cell division</keyword>
<keyword id="KW-0997">Cell inner membrane</keyword>
<keyword id="KW-1003">Cell membrane</keyword>
<keyword id="KW-0472">Membrane</keyword>
<keyword id="KW-1185">Reference proteome</keyword>
<keyword id="KW-0812">Transmembrane</keyword>
<keyword id="KW-1133">Transmembrane helix</keyword>
<organism>
    <name type="scientific">Alcanivorax borkumensis (strain ATCC 700651 / DSM 11573 / NCIMB 13689 / SK2)</name>
    <dbReference type="NCBI Taxonomy" id="393595"/>
    <lineage>
        <taxon>Bacteria</taxon>
        <taxon>Pseudomonadati</taxon>
        <taxon>Pseudomonadota</taxon>
        <taxon>Gammaproteobacteria</taxon>
        <taxon>Oceanospirillales</taxon>
        <taxon>Alcanivoracaceae</taxon>
        <taxon>Alcanivorax</taxon>
    </lineage>
</organism>
<accession>Q0VRZ9</accession>
<proteinExistence type="inferred from homology"/>
<comment type="function">
    <text evidence="1">Essential cell division protein. May link together the upstream cell division proteins, which are predominantly cytoplasmic, with the downstream cell division proteins, which are predominantly periplasmic. May control correct divisome assembly.</text>
</comment>
<comment type="subunit">
    <text evidence="1">Part of a complex composed of FtsB, FtsL and FtsQ.</text>
</comment>
<comment type="subcellular location">
    <subcellularLocation>
        <location evidence="1">Cell inner membrane</location>
        <topology evidence="1">Single-pass type II membrane protein</topology>
    </subcellularLocation>
    <text evidence="1">Localizes to the division septum.</text>
</comment>
<comment type="similarity">
    <text evidence="1">Belongs to the FtsQ/DivIB family. FtsQ subfamily.</text>
</comment>
<dbReference type="EMBL" id="AM286690">
    <property type="protein sequence ID" value="CAL16049.1"/>
    <property type="molecule type" value="Genomic_DNA"/>
</dbReference>
<dbReference type="RefSeq" id="WP_011587887.1">
    <property type="nucleotide sequence ID" value="NC_008260.1"/>
</dbReference>
<dbReference type="SMR" id="Q0VRZ9"/>
<dbReference type="STRING" id="393595.ABO_0601"/>
<dbReference type="KEGG" id="abo:ABO_0601"/>
<dbReference type="eggNOG" id="COG1589">
    <property type="taxonomic scope" value="Bacteria"/>
</dbReference>
<dbReference type="HOGENOM" id="CLU_064041_1_1_6"/>
<dbReference type="OrthoDB" id="9790370at2"/>
<dbReference type="Proteomes" id="UP000008871">
    <property type="component" value="Chromosome"/>
</dbReference>
<dbReference type="GO" id="GO:0032153">
    <property type="term" value="C:cell division site"/>
    <property type="evidence" value="ECO:0007669"/>
    <property type="project" value="UniProtKB-UniRule"/>
</dbReference>
<dbReference type="GO" id="GO:0005886">
    <property type="term" value="C:plasma membrane"/>
    <property type="evidence" value="ECO:0007669"/>
    <property type="project" value="UniProtKB-SubCell"/>
</dbReference>
<dbReference type="GO" id="GO:0090529">
    <property type="term" value="P:cell septum assembly"/>
    <property type="evidence" value="ECO:0007669"/>
    <property type="project" value="InterPro"/>
</dbReference>
<dbReference type="GO" id="GO:0043093">
    <property type="term" value="P:FtsZ-dependent cytokinesis"/>
    <property type="evidence" value="ECO:0007669"/>
    <property type="project" value="UniProtKB-UniRule"/>
</dbReference>
<dbReference type="Gene3D" id="3.40.50.11690">
    <property type="entry name" value="Cell division protein FtsQ/DivIB"/>
    <property type="match status" value="1"/>
</dbReference>
<dbReference type="Gene3D" id="3.10.20.310">
    <property type="entry name" value="membrane protein fhac"/>
    <property type="match status" value="1"/>
</dbReference>
<dbReference type="HAMAP" id="MF_00911">
    <property type="entry name" value="FtsQ_subfam"/>
    <property type="match status" value="1"/>
</dbReference>
<dbReference type="InterPro" id="IPR005548">
    <property type="entry name" value="Cell_div_FtsQ/DivIB_C"/>
</dbReference>
<dbReference type="InterPro" id="IPR026579">
    <property type="entry name" value="FtsQ"/>
</dbReference>
<dbReference type="InterPro" id="IPR045335">
    <property type="entry name" value="FtsQ_C_sf"/>
</dbReference>
<dbReference type="InterPro" id="IPR034746">
    <property type="entry name" value="POTRA"/>
</dbReference>
<dbReference type="InterPro" id="IPR013685">
    <property type="entry name" value="POTRA_FtsQ_type"/>
</dbReference>
<dbReference type="PANTHER" id="PTHR35851">
    <property type="entry name" value="CELL DIVISION PROTEIN FTSQ"/>
    <property type="match status" value="1"/>
</dbReference>
<dbReference type="PANTHER" id="PTHR35851:SF1">
    <property type="entry name" value="CELL DIVISION PROTEIN FTSQ"/>
    <property type="match status" value="1"/>
</dbReference>
<dbReference type="Pfam" id="PF03799">
    <property type="entry name" value="FtsQ_DivIB_C"/>
    <property type="match status" value="1"/>
</dbReference>
<dbReference type="Pfam" id="PF08478">
    <property type="entry name" value="POTRA_1"/>
    <property type="match status" value="1"/>
</dbReference>
<dbReference type="PROSITE" id="PS51779">
    <property type="entry name" value="POTRA"/>
    <property type="match status" value="1"/>
</dbReference>
<reference key="1">
    <citation type="journal article" date="2006" name="Nat. Biotechnol.">
        <title>Genome sequence of the ubiquitous hydrocarbon-degrading marine bacterium Alcanivorax borkumensis.</title>
        <authorList>
            <person name="Schneiker S."/>
            <person name="Martins dos Santos V.A.P."/>
            <person name="Bartels D."/>
            <person name="Bekel T."/>
            <person name="Brecht M."/>
            <person name="Buhrmester J."/>
            <person name="Chernikova T.N."/>
            <person name="Denaro R."/>
            <person name="Ferrer M."/>
            <person name="Gertler C."/>
            <person name="Goesmann A."/>
            <person name="Golyshina O.V."/>
            <person name="Kaminski F."/>
            <person name="Khachane A.N."/>
            <person name="Lang S."/>
            <person name="Linke B."/>
            <person name="McHardy A.C."/>
            <person name="Meyer F."/>
            <person name="Nechitaylo T."/>
            <person name="Puehler A."/>
            <person name="Regenhardt D."/>
            <person name="Rupp O."/>
            <person name="Sabirova J.S."/>
            <person name="Selbitschka W."/>
            <person name="Yakimov M.M."/>
            <person name="Timmis K.N."/>
            <person name="Vorhoelter F.-J."/>
            <person name="Weidner S."/>
            <person name="Kaiser O."/>
            <person name="Golyshin P.N."/>
        </authorList>
    </citation>
    <scope>NUCLEOTIDE SEQUENCE [LARGE SCALE GENOMIC DNA]</scope>
    <source>
        <strain>ATCC 700651 / DSM 11573 / NCIMB 13689 / SK2</strain>
    </source>
</reference>
<protein>
    <recommendedName>
        <fullName evidence="1">Cell division protein FtsQ</fullName>
    </recommendedName>
</protein>
<gene>
    <name evidence="1" type="primary">ftsQ</name>
    <name type="ordered locus">ABO_0601</name>
</gene>
<evidence type="ECO:0000255" key="1">
    <source>
        <dbReference type="HAMAP-Rule" id="MF_00911"/>
    </source>
</evidence>
<evidence type="ECO:0000255" key="2">
    <source>
        <dbReference type="PROSITE-ProRule" id="PRU01115"/>
    </source>
</evidence>
<sequence length="258" mass="29331">MAKNAPAPRGARRKPVKKVGVPLRERVATAVPWMLVGSVAMVSLLAVIYLPAALDGYPIRKVGVDGVTDVRRQQQIETALAALVREENYFSVPLEEIYQQSQGLSWVEEVSVRRQWPDTVVLTVEERRPVAVWNESVLVSDSGQPFKALKQYDLDDLPHLNGPEQRLEEVMGFYHSMGKTLADVDLSIRSMEVNARLTARLTLNNDMELVVDREHYTTKLRRFVRLYRGVLNTDSRQVARVDLRYADGMAVTWREQQS</sequence>